<accession>Q06494</accession>
<accession>D6W4C4</accession>
<dbReference type="EC" id="1.1.1.65"/>
<dbReference type="EMBL" id="U40828">
    <property type="protein sequence ID" value="AAB68066.1"/>
    <property type="molecule type" value="Genomic_DNA"/>
</dbReference>
<dbReference type="EMBL" id="BK006949">
    <property type="protein sequence ID" value="DAA11540.1"/>
    <property type="molecule type" value="Genomic_DNA"/>
</dbReference>
<dbReference type="PIR" id="S69018">
    <property type="entry name" value="S69018"/>
</dbReference>
<dbReference type="RefSeq" id="NP_015452.1">
    <property type="nucleotide sequence ID" value="NM_001184224.1"/>
</dbReference>
<dbReference type="SMR" id="Q06494"/>
<dbReference type="BioGRID" id="36294">
    <property type="interactions" value="33"/>
</dbReference>
<dbReference type="FunCoup" id="Q06494">
    <property type="interactions" value="79"/>
</dbReference>
<dbReference type="IntAct" id="Q06494">
    <property type="interactions" value="1"/>
</dbReference>
<dbReference type="STRING" id="4932.YPR127W"/>
<dbReference type="iPTMnet" id="Q06494"/>
<dbReference type="PaxDb" id="4932-YPR127W"/>
<dbReference type="PeptideAtlas" id="Q06494"/>
<dbReference type="EnsemblFungi" id="YPR127W_mRNA">
    <property type="protein sequence ID" value="YPR127W"/>
    <property type="gene ID" value="YPR127W"/>
</dbReference>
<dbReference type="GeneID" id="856245"/>
<dbReference type="KEGG" id="sce:YPR127W"/>
<dbReference type="AGR" id="SGD:S000006331"/>
<dbReference type="SGD" id="S000006331">
    <property type="gene designation" value="YPR127W"/>
</dbReference>
<dbReference type="VEuPathDB" id="FungiDB:YPR127W"/>
<dbReference type="eggNOG" id="KOG1575">
    <property type="taxonomic scope" value="Eukaryota"/>
</dbReference>
<dbReference type="HOGENOM" id="CLU_023205_2_1_1"/>
<dbReference type="InParanoid" id="Q06494"/>
<dbReference type="OMA" id="YPVEETI"/>
<dbReference type="OrthoDB" id="37537at2759"/>
<dbReference type="BioCyc" id="MetaCyc:G3O-34264-MONOMER"/>
<dbReference type="BioCyc" id="YEAST:G3O-34264-MONOMER"/>
<dbReference type="UniPathway" id="UPA00192">
    <property type="reaction ID" value="UER00307"/>
</dbReference>
<dbReference type="BioGRID-ORCS" id="856245">
    <property type="hits" value="1 hit in 10 CRISPR screens"/>
</dbReference>
<dbReference type="PRO" id="PR:Q06494"/>
<dbReference type="Proteomes" id="UP000002311">
    <property type="component" value="Chromosome XVI"/>
</dbReference>
<dbReference type="RNAct" id="Q06494">
    <property type="molecule type" value="protein"/>
</dbReference>
<dbReference type="GO" id="GO:0005737">
    <property type="term" value="C:cytoplasm"/>
    <property type="evidence" value="ECO:0007005"/>
    <property type="project" value="SGD"/>
</dbReference>
<dbReference type="GO" id="GO:0005634">
    <property type="term" value="C:nucleus"/>
    <property type="evidence" value="ECO:0007005"/>
    <property type="project" value="SGD"/>
</dbReference>
<dbReference type="GO" id="GO:0004033">
    <property type="term" value="F:aldo-keto reductase (NADPH) activity"/>
    <property type="evidence" value="ECO:0000318"/>
    <property type="project" value="GO_Central"/>
</dbReference>
<dbReference type="GO" id="GO:0050236">
    <property type="term" value="F:pyridoxine:NADP 4-dehydrogenase activity"/>
    <property type="evidence" value="ECO:0007669"/>
    <property type="project" value="UniProtKB-EC"/>
</dbReference>
<dbReference type="GO" id="GO:0042820">
    <property type="term" value="P:vitamin B6 catabolic process"/>
    <property type="evidence" value="ECO:0007669"/>
    <property type="project" value="UniProtKB-UniPathway"/>
</dbReference>
<dbReference type="CDD" id="cd19077">
    <property type="entry name" value="AKR_AKR8A1-2"/>
    <property type="match status" value="1"/>
</dbReference>
<dbReference type="FunFam" id="3.20.20.100:FF:000059">
    <property type="entry name" value="Conserved protein"/>
    <property type="match status" value="1"/>
</dbReference>
<dbReference type="Gene3D" id="3.20.20.100">
    <property type="entry name" value="NADP-dependent oxidoreductase domain"/>
    <property type="match status" value="1"/>
</dbReference>
<dbReference type="InterPro" id="IPR050791">
    <property type="entry name" value="Aldo-Keto_reductase"/>
</dbReference>
<dbReference type="InterPro" id="IPR023210">
    <property type="entry name" value="NADP_OxRdtase_dom"/>
</dbReference>
<dbReference type="InterPro" id="IPR036812">
    <property type="entry name" value="NADP_OxRdtase_dom_sf"/>
</dbReference>
<dbReference type="PANTHER" id="PTHR43625">
    <property type="entry name" value="AFLATOXIN B1 ALDEHYDE REDUCTASE"/>
    <property type="match status" value="1"/>
</dbReference>
<dbReference type="PANTHER" id="PTHR43625:SF78">
    <property type="entry name" value="PYRIDOXAL REDUCTASE-RELATED"/>
    <property type="match status" value="1"/>
</dbReference>
<dbReference type="Pfam" id="PF00248">
    <property type="entry name" value="Aldo_ket_red"/>
    <property type="match status" value="1"/>
</dbReference>
<dbReference type="SUPFAM" id="SSF51430">
    <property type="entry name" value="NAD(P)-linked oxidoreductase"/>
    <property type="match status" value="1"/>
</dbReference>
<protein>
    <recommendedName>
        <fullName>Putative pyridoxal reductase</fullName>
        <shortName>PL reductase</shortName>
        <shortName>PL-red</shortName>
        <ecNumber>1.1.1.65</ecNumber>
    </recommendedName>
</protein>
<gene>
    <name type="ordered locus">YPR127W</name>
</gene>
<reference key="1">
    <citation type="journal article" date="1997" name="Nature">
        <title>The nucleotide sequence of Saccharomyces cerevisiae chromosome XVI.</title>
        <authorList>
            <person name="Bussey H."/>
            <person name="Storms R.K."/>
            <person name="Ahmed A."/>
            <person name="Albermann K."/>
            <person name="Allen E."/>
            <person name="Ansorge W."/>
            <person name="Araujo R."/>
            <person name="Aparicio A."/>
            <person name="Barrell B.G."/>
            <person name="Badcock K."/>
            <person name="Benes V."/>
            <person name="Botstein D."/>
            <person name="Bowman S."/>
            <person name="Brueckner M."/>
            <person name="Carpenter J."/>
            <person name="Cherry J.M."/>
            <person name="Chung E."/>
            <person name="Churcher C.M."/>
            <person name="Coster F."/>
            <person name="Davis K."/>
            <person name="Davis R.W."/>
            <person name="Dietrich F.S."/>
            <person name="Delius H."/>
            <person name="DiPaolo T."/>
            <person name="Dubois E."/>
            <person name="Duesterhoeft A."/>
            <person name="Duncan M."/>
            <person name="Floeth M."/>
            <person name="Fortin N."/>
            <person name="Friesen J.D."/>
            <person name="Fritz C."/>
            <person name="Goffeau A."/>
            <person name="Hall J."/>
            <person name="Hebling U."/>
            <person name="Heumann K."/>
            <person name="Hilbert H."/>
            <person name="Hillier L.W."/>
            <person name="Hunicke-Smith S."/>
            <person name="Hyman R.W."/>
            <person name="Johnston M."/>
            <person name="Kalman S."/>
            <person name="Kleine K."/>
            <person name="Komp C."/>
            <person name="Kurdi O."/>
            <person name="Lashkari D."/>
            <person name="Lew H."/>
            <person name="Lin A."/>
            <person name="Lin D."/>
            <person name="Louis E.J."/>
            <person name="Marathe R."/>
            <person name="Messenguy F."/>
            <person name="Mewes H.-W."/>
            <person name="Mirtipati S."/>
            <person name="Moestl D."/>
            <person name="Mueller-Auer S."/>
            <person name="Namath A."/>
            <person name="Nentwich U."/>
            <person name="Oefner P."/>
            <person name="Pearson D."/>
            <person name="Petel F.X."/>
            <person name="Pohl T.M."/>
            <person name="Purnelle B."/>
            <person name="Rajandream M.A."/>
            <person name="Rechmann S."/>
            <person name="Rieger M."/>
            <person name="Riles L."/>
            <person name="Roberts D."/>
            <person name="Schaefer M."/>
            <person name="Scharfe M."/>
            <person name="Scherens B."/>
            <person name="Schramm S."/>
            <person name="Schroeder M."/>
            <person name="Sdicu A.-M."/>
            <person name="Tettelin H."/>
            <person name="Urrestarazu L.A."/>
            <person name="Ushinsky S."/>
            <person name="Vierendeels F."/>
            <person name="Vissers S."/>
            <person name="Voss H."/>
            <person name="Walsh S.V."/>
            <person name="Wambutt R."/>
            <person name="Wang Y."/>
            <person name="Wedler E."/>
            <person name="Wedler H."/>
            <person name="Winnett E."/>
            <person name="Zhong W.-W."/>
            <person name="Zollner A."/>
            <person name="Vo D.H."/>
            <person name="Hani J."/>
        </authorList>
    </citation>
    <scope>NUCLEOTIDE SEQUENCE [LARGE SCALE GENOMIC DNA]</scope>
    <source>
        <strain>ATCC 204508 / S288c</strain>
    </source>
</reference>
<reference key="2">
    <citation type="journal article" date="2014" name="G3 (Bethesda)">
        <title>The reference genome sequence of Saccharomyces cerevisiae: Then and now.</title>
        <authorList>
            <person name="Engel S.R."/>
            <person name="Dietrich F.S."/>
            <person name="Fisk D.G."/>
            <person name="Binkley G."/>
            <person name="Balakrishnan R."/>
            <person name="Costanzo M.C."/>
            <person name="Dwight S.S."/>
            <person name="Hitz B.C."/>
            <person name="Karra K."/>
            <person name="Nash R.S."/>
            <person name="Weng S."/>
            <person name="Wong E.D."/>
            <person name="Lloyd P."/>
            <person name="Skrzypek M.S."/>
            <person name="Miyasato S.R."/>
            <person name="Simison M."/>
            <person name="Cherry J.M."/>
        </authorList>
    </citation>
    <scope>GENOME REANNOTATION</scope>
    <source>
        <strain>ATCC 204508 / S288c</strain>
    </source>
</reference>
<reference key="3">
    <citation type="journal article" date="2003" name="Nature">
        <title>Global analysis of protein localization in budding yeast.</title>
        <authorList>
            <person name="Huh W.-K."/>
            <person name="Falvo J.V."/>
            <person name="Gerke L.C."/>
            <person name="Carroll A.S."/>
            <person name="Howson R.W."/>
            <person name="Weissman J.S."/>
            <person name="O'Shea E.K."/>
        </authorList>
    </citation>
    <scope>SUBCELLULAR LOCATION [LARGE SCALE ANALYSIS]</scope>
</reference>
<reference key="4">
    <citation type="journal article" date="2003" name="Nature">
        <title>Global analysis of protein expression in yeast.</title>
        <authorList>
            <person name="Ghaemmaghami S."/>
            <person name="Huh W.-K."/>
            <person name="Bower K."/>
            <person name="Howson R.W."/>
            <person name="Belle A."/>
            <person name="Dephoure N."/>
            <person name="O'Shea E.K."/>
            <person name="Weissman J.S."/>
        </authorList>
    </citation>
    <scope>LEVEL OF PROTEIN EXPRESSION [LARGE SCALE ANALYSIS]</scope>
</reference>
<comment type="function">
    <text evidence="1">Catalyzes the reduction of pyridoxal (PL) with NADPH and oxidation of pyridoxine (PN) with NADP(+).</text>
</comment>
<comment type="catalytic activity">
    <reaction>
        <text>pyridoxine + NADP(+) = pyridoxal + NADPH + H(+)</text>
        <dbReference type="Rhea" id="RHEA:16129"/>
        <dbReference type="ChEBI" id="CHEBI:15378"/>
        <dbReference type="ChEBI" id="CHEBI:16709"/>
        <dbReference type="ChEBI" id="CHEBI:17310"/>
        <dbReference type="ChEBI" id="CHEBI:57783"/>
        <dbReference type="ChEBI" id="CHEBI:58349"/>
        <dbReference type="EC" id="1.1.1.65"/>
    </reaction>
</comment>
<comment type="pathway">
    <text>Cofactor degradation; B6 vitamer degradation; pyridoxal from pyridoxine (dehydrogenase route): step 1/1.</text>
</comment>
<comment type="subcellular location">
    <subcellularLocation>
        <location evidence="2">Cytoplasm</location>
    </subcellularLocation>
    <subcellularLocation>
        <location evidence="2">Nucleus</location>
    </subcellularLocation>
</comment>
<comment type="miscellaneous">
    <text evidence="3">Present with 2190 molecules/cell in log phase SD medium.</text>
</comment>
<comment type="similarity">
    <text evidence="4">Belongs to the aldo/keto reductase family.</text>
</comment>
<feature type="chain" id="PRO_0000257816" description="Putative pyridoxal reductase">
    <location>
        <begin position="1"/>
        <end position="345"/>
    </location>
</feature>
<feature type="active site" description="Proton donor" evidence="1">
    <location>
        <position position="60"/>
    </location>
</feature>
<name>PLR1_YEAST</name>
<sequence>MSVADLKNNIHKLDTGYGLMSLTWRAEPIPQSQAFEAMHRVVELSRERGHKAFFNVGEFYGPDFINLSYVHDFFAKYPDLRKDVVISCKGGADNATLTPRGSHDDVVQSVKNSVSAIGGYIDIFEVARIDTSLCTKGEVYPYESFEALAEMISEGVIGGISLSEVNEEQIRAIHKDWGKFLTCVEVELSLFSNDILHNGIAKTCAELGLSIICYSPLGRGLLTGQLKSNADIPEGDFRKSLKRFSDESLKKNLTLVRFLQEEIVDKRPQNNSITLAQLALGWVKHWNKVPEYSGAKFIPIPSGSSISKVNENFDEQKTKLTDQEFNAINKYLTTFHTVGDRYEMA</sequence>
<organism>
    <name type="scientific">Saccharomyces cerevisiae (strain ATCC 204508 / S288c)</name>
    <name type="common">Baker's yeast</name>
    <dbReference type="NCBI Taxonomy" id="559292"/>
    <lineage>
        <taxon>Eukaryota</taxon>
        <taxon>Fungi</taxon>
        <taxon>Dikarya</taxon>
        <taxon>Ascomycota</taxon>
        <taxon>Saccharomycotina</taxon>
        <taxon>Saccharomycetes</taxon>
        <taxon>Saccharomycetales</taxon>
        <taxon>Saccharomycetaceae</taxon>
        <taxon>Saccharomyces</taxon>
    </lineage>
</organism>
<proteinExistence type="evidence at protein level"/>
<evidence type="ECO:0000250" key="1"/>
<evidence type="ECO:0000269" key="2">
    <source>
    </source>
</evidence>
<evidence type="ECO:0000269" key="3">
    <source>
    </source>
</evidence>
<evidence type="ECO:0000305" key="4"/>
<keyword id="KW-0963">Cytoplasm</keyword>
<keyword id="KW-0521">NADP</keyword>
<keyword id="KW-0539">Nucleus</keyword>
<keyword id="KW-0560">Oxidoreductase</keyword>
<keyword id="KW-1185">Reference proteome</keyword>